<proteinExistence type="inferred from homology"/>
<feature type="chain" id="PRO_0000340456" description="Urease accessory protein UreD">
    <location>
        <begin position="1"/>
        <end position="266"/>
    </location>
</feature>
<organism>
    <name type="scientific">Jannaschia sp. (strain CCS1)</name>
    <dbReference type="NCBI Taxonomy" id="290400"/>
    <lineage>
        <taxon>Bacteria</taxon>
        <taxon>Pseudomonadati</taxon>
        <taxon>Pseudomonadota</taxon>
        <taxon>Alphaproteobacteria</taxon>
        <taxon>Rhodobacterales</taxon>
        <taxon>Roseobacteraceae</taxon>
        <taxon>Jannaschia</taxon>
    </lineage>
</organism>
<reference key="1">
    <citation type="submission" date="2006-02" db="EMBL/GenBank/DDBJ databases">
        <title>Complete sequence of chromosome of Jannaschia sp. CCS1.</title>
        <authorList>
            <consortium name="US DOE Joint Genome Institute"/>
            <person name="Copeland A."/>
            <person name="Lucas S."/>
            <person name="Lapidus A."/>
            <person name="Barry K."/>
            <person name="Detter J.C."/>
            <person name="Glavina del Rio T."/>
            <person name="Hammon N."/>
            <person name="Israni S."/>
            <person name="Pitluck S."/>
            <person name="Brettin T."/>
            <person name="Bruce D."/>
            <person name="Han C."/>
            <person name="Tapia R."/>
            <person name="Gilna P."/>
            <person name="Chertkov O."/>
            <person name="Saunders E."/>
            <person name="Schmutz J."/>
            <person name="Larimer F."/>
            <person name="Land M."/>
            <person name="Kyrpides N."/>
            <person name="Lykidis A."/>
            <person name="Moran M.A."/>
            <person name="Belas R."/>
            <person name="Ye W."/>
            <person name="Buchan A."/>
            <person name="Gonzalez J.M."/>
            <person name="Schell M.A."/>
            <person name="Richardson P."/>
        </authorList>
    </citation>
    <scope>NUCLEOTIDE SEQUENCE [LARGE SCALE GENOMIC DNA]</scope>
    <source>
        <strain>CCS1</strain>
    </source>
</reference>
<keyword id="KW-0143">Chaperone</keyword>
<keyword id="KW-0963">Cytoplasm</keyword>
<keyword id="KW-0996">Nickel insertion</keyword>
<keyword id="KW-1185">Reference proteome</keyword>
<comment type="function">
    <text evidence="1">Required for maturation of urease via the functional incorporation of the urease nickel metallocenter.</text>
</comment>
<comment type="subunit">
    <text evidence="1">UreD, UreF and UreG form a complex that acts as a GTP-hydrolysis-dependent molecular chaperone, activating the urease apoprotein by helping to assemble the nickel containing metallocenter of UreC. The UreE protein probably delivers the nickel.</text>
</comment>
<comment type="subcellular location">
    <subcellularLocation>
        <location evidence="1">Cytoplasm</location>
    </subcellularLocation>
</comment>
<comment type="similarity">
    <text evidence="1">Belongs to the UreD family.</text>
</comment>
<comment type="sequence caution" evidence="2">
    <conflict type="erroneous initiation">
        <sequence resource="EMBL-CDS" id="ABD54661"/>
    </conflict>
</comment>
<accession>Q28RK1</accession>
<dbReference type="EMBL" id="CP000264">
    <property type="protein sequence ID" value="ABD54661.1"/>
    <property type="status" value="ALT_INIT"/>
    <property type="molecule type" value="Genomic_DNA"/>
</dbReference>
<dbReference type="SMR" id="Q28RK1"/>
<dbReference type="STRING" id="290400.Jann_1744"/>
<dbReference type="KEGG" id="jan:Jann_1744"/>
<dbReference type="eggNOG" id="COG0829">
    <property type="taxonomic scope" value="Bacteria"/>
</dbReference>
<dbReference type="HOGENOM" id="CLU_056339_2_0_5"/>
<dbReference type="OrthoDB" id="9798842at2"/>
<dbReference type="Proteomes" id="UP000008326">
    <property type="component" value="Chromosome"/>
</dbReference>
<dbReference type="GO" id="GO:0005737">
    <property type="term" value="C:cytoplasm"/>
    <property type="evidence" value="ECO:0007669"/>
    <property type="project" value="UniProtKB-SubCell"/>
</dbReference>
<dbReference type="GO" id="GO:0016151">
    <property type="term" value="F:nickel cation binding"/>
    <property type="evidence" value="ECO:0007669"/>
    <property type="project" value="UniProtKB-UniRule"/>
</dbReference>
<dbReference type="HAMAP" id="MF_01384">
    <property type="entry name" value="UreD"/>
    <property type="match status" value="1"/>
</dbReference>
<dbReference type="InterPro" id="IPR002669">
    <property type="entry name" value="UreD"/>
</dbReference>
<dbReference type="PANTHER" id="PTHR33643">
    <property type="entry name" value="UREASE ACCESSORY PROTEIN D"/>
    <property type="match status" value="1"/>
</dbReference>
<dbReference type="PANTHER" id="PTHR33643:SF1">
    <property type="entry name" value="UREASE ACCESSORY PROTEIN D"/>
    <property type="match status" value="1"/>
</dbReference>
<dbReference type="Pfam" id="PF01774">
    <property type="entry name" value="UreD"/>
    <property type="match status" value="1"/>
</dbReference>
<sequence>MLDAATPTHQRVRGRAMARFTGRRLRDLHQSGSAKVLIPRVFGRAPEVVFLNTAGGITGGDRLDYALHVDDGTCVGTTQTAERAYRSHGPMGRVSTRLTIGQGATLHWVPQEMILFDGVALERDLSVEMAGDAELVMLETLVLGRAAMGEVLRDLHLRDRRRVTRGGKLAMVEAIGLGPDDFASSSPAGLNGAVATASLTLMAQDAEDRLNALRAVLPTDVRSAASAWDGRLTARFLAPQAYPLRRAVARAVEQVTCGALPRVWQI</sequence>
<protein>
    <recommendedName>
        <fullName evidence="1">Urease accessory protein UreD</fullName>
    </recommendedName>
</protein>
<name>URED_JANSC</name>
<gene>
    <name evidence="1" type="primary">ureD</name>
    <name type="ordered locus">Jann_1744</name>
</gene>
<evidence type="ECO:0000255" key="1">
    <source>
        <dbReference type="HAMAP-Rule" id="MF_01384"/>
    </source>
</evidence>
<evidence type="ECO:0000305" key="2"/>